<proteinExistence type="inferred from homology"/>
<protein>
    <recommendedName>
        <fullName evidence="1">ATP synthase subunit delta</fullName>
    </recommendedName>
    <alternativeName>
        <fullName evidence="1">ATP synthase F(1) sector subunit delta</fullName>
    </alternativeName>
    <alternativeName>
        <fullName evidence="1">F-type ATPase subunit delta</fullName>
        <shortName evidence="1">F-ATPase subunit delta</shortName>
    </alternativeName>
</protein>
<feature type="chain" id="PRO_1000184682" description="ATP synthase subunit delta">
    <location>
        <begin position="1"/>
        <end position="185"/>
    </location>
</feature>
<evidence type="ECO:0000255" key="1">
    <source>
        <dbReference type="HAMAP-Rule" id="MF_01416"/>
    </source>
</evidence>
<accession>B6J960</accession>
<reference key="1">
    <citation type="journal article" date="2009" name="Infect. Immun.">
        <title>Comparative genomics reveal extensive transposon-mediated genomic plasticity and diversity among potential effector proteins within the genus Coxiella.</title>
        <authorList>
            <person name="Beare P.A."/>
            <person name="Unsworth N."/>
            <person name="Andoh M."/>
            <person name="Voth D.E."/>
            <person name="Omsland A."/>
            <person name="Gilk S.D."/>
            <person name="Williams K.P."/>
            <person name="Sobral B.W."/>
            <person name="Kupko J.J. III"/>
            <person name="Porcella S.F."/>
            <person name="Samuel J.E."/>
            <person name="Heinzen R.A."/>
        </authorList>
    </citation>
    <scope>NUCLEOTIDE SEQUENCE [LARGE SCALE GENOMIC DNA]</scope>
    <source>
        <strain>CbuK_Q154</strain>
    </source>
</reference>
<dbReference type="EMBL" id="CP001020">
    <property type="protein sequence ID" value="ACJ19377.1"/>
    <property type="molecule type" value="Genomic_DNA"/>
</dbReference>
<dbReference type="RefSeq" id="WP_005770033.1">
    <property type="nucleotide sequence ID" value="NC_011528.1"/>
</dbReference>
<dbReference type="SMR" id="B6J960"/>
<dbReference type="KEGG" id="cbc:CbuK_0050"/>
<dbReference type="HOGENOM" id="CLU_085114_3_0_6"/>
<dbReference type="GO" id="GO:0005886">
    <property type="term" value="C:plasma membrane"/>
    <property type="evidence" value="ECO:0007669"/>
    <property type="project" value="UniProtKB-SubCell"/>
</dbReference>
<dbReference type="GO" id="GO:0045259">
    <property type="term" value="C:proton-transporting ATP synthase complex"/>
    <property type="evidence" value="ECO:0007669"/>
    <property type="project" value="UniProtKB-KW"/>
</dbReference>
<dbReference type="GO" id="GO:0046933">
    <property type="term" value="F:proton-transporting ATP synthase activity, rotational mechanism"/>
    <property type="evidence" value="ECO:0007669"/>
    <property type="project" value="UniProtKB-UniRule"/>
</dbReference>
<dbReference type="Gene3D" id="1.10.520.20">
    <property type="entry name" value="N-terminal domain of the delta subunit of the F1F0-ATP synthase"/>
    <property type="match status" value="1"/>
</dbReference>
<dbReference type="HAMAP" id="MF_01416">
    <property type="entry name" value="ATP_synth_delta_bact"/>
    <property type="match status" value="1"/>
</dbReference>
<dbReference type="InterPro" id="IPR026015">
    <property type="entry name" value="ATP_synth_OSCP/delta_N_sf"/>
</dbReference>
<dbReference type="InterPro" id="IPR000711">
    <property type="entry name" value="ATPase_OSCP/dsu"/>
</dbReference>
<dbReference type="NCBIfam" id="TIGR01145">
    <property type="entry name" value="ATP_synt_delta"/>
    <property type="match status" value="1"/>
</dbReference>
<dbReference type="NCBIfam" id="NF004402">
    <property type="entry name" value="PRK05758.2-2"/>
    <property type="match status" value="1"/>
</dbReference>
<dbReference type="PANTHER" id="PTHR11910">
    <property type="entry name" value="ATP SYNTHASE DELTA CHAIN"/>
    <property type="match status" value="1"/>
</dbReference>
<dbReference type="Pfam" id="PF00213">
    <property type="entry name" value="OSCP"/>
    <property type="match status" value="1"/>
</dbReference>
<dbReference type="PRINTS" id="PR00125">
    <property type="entry name" value="ATPASEDELTA"/>
</dbReference>
<dbReference type="SUPFAM" id="SSF47928">
    <property type="entry name" value="N-terminal domain of the delta subunit of the F1F0-ATP synthase"/>
    <property type="match status" value="1"/>
</dbReference>
<comment type="function">
    <text evidence="1">F(1)F(0) ATP synthase produces ATP from ADP in the presence of a proton or sodium gradient. F-type ATPases consist of two structural domains, F(1) containing the extramembraneous catalytic core and F(0) containing the membrane proton channel, linked together by a central stalk and a peripheral stalk. During catalysis, ATP synthesis in the catalytic domain of F(1) is coupled via a rotary mechanism of the central stalk subunits to proton translocation.</text>
</comment>
<comment type="function">
    <text evidence="1">This protein is part of the stalk that links CF(0) to CF(1). It either transmits conformational changes from CF(0) to CF(1) or is implicated in proton conduction.</text>
</comment>
<comment type="subunit">
    <text evidence="1">F-type ATPases have 2 components, F(1) - the catalytic core - and F(0) - the membrane proton channel. F(1) has five subunits: alpha(3), beta(3), gamma(1), delta(1), epsilon(1). F(0) has three main subunits: a(1), b(2) and c(10-14). The alpha and beta chains form an alternating ring which encloses part of the gamma chain. F(1) is attached to F(0) by a central stalk formed by the gamma and epsilon chains, while a peripheral stalk is formed by the delta and b chains.</text>
</comment>
<comment type="subcellular location">
    <subcellularLocation>
        <location evidence="1">Cell inner membrane</location>
        <topology evidence="1">Peripheral membrane protein</topology>
    </subcellularLocation>
</comment>
<comment type="similarity">
    <text evidence="1">Belongs to the ATPase delta chain family.</text>
</comment>
<gene>
    <name evidence="1" type="primary">atpH</name>
    <name type="ordered locus">CbuK_0050</name>
</gene>
<keyword id="KW-0066">ATP synthesis</keyword>
<keyword id="KW-0997">Cell inner membrane</keyword>
<keyword id="KW-1003">Cell membrane</keyword>
<keyword id="KW-0139">CF(1)</keyword>
<keyword id="KW-0375">Hydrogen ion transport</keyword>
<keyword id="KW-0406">Ion transport</keyword>
<keyword id="KW-0472">Membrane</keyword>
<keyword id="KW-0813">Transport</keyword>
<sequence>MALHLTLARPYAKAAFADGQKANQLEAWLAVFTAFSKIIKNKEVARQIINPKFSDKEIKTLLFDLIQTIEPESTKQLKDKIDHFLQLLIDEKRLMILPDIALVYQQLLNKYQDIIEASVTYVFPLNDEHRQQIQKQLEKRFNAEVKLKMIKDESLLGGVIIRAGNWVMDGSIKGKLTRLAENLKG</sequence>
<organism>
    <name type="scientific">Coxiella burnetii (strain CbuK_Q154)</name>
    <name type="common">Coxiella burnetii (strain Q154)</name>
    <dbReference type="NCBI Taxonomy" id="434924"/>
    <lineage>
        <taxon>Bacteria</taxon>
        <taxon>Pseudomonadati</taxon>
        <taxon>Pseudomonadota</taxon>
        <taxon>Gammaproteobacteria</taxon>
        <taxon>Legionellales</taxon>
        <taxon>Coxiellaceae</taxon>
        <taxon>Coxiella</taxon>
    </lineage>
</organism>
<name>ATPD_COXB1</name>